<sequence length="701" mass="78862">MGLPEERRKSGSGSRAREETGAEGRVRGWSPPPEVRRSAHVPSLQRYRELHRRSVEEPREFWGNIAKEFYWKTACPGPFLQYNFDVTKGKIFTEWMKGATTNICYNVLDRNVHEKKLGDKVAFYWEGNEPGETTKITYRELLVQVCQFSNVLRKQGIQKGDRVAIYMPMILELVVAMLACARLGALHSIVFAGFSAESLCERILDSSCCLLITTDAFYRGEKLVNLKELADESLEKCREKGFPVRCCIVVKHLGRAELGMNDSPSQSPPVKRPCPDVQICWNEGVDLWWHELMQQAGDECEPEWCDAEDPLFILYTSGSTGKPKGVVHTIGGYMLYVATTFKYVFDFHPEDVFWCTADIGWITGHSYVTYGPLANGATSVLFEGIPTYPDEGRLWSIVDKYKVTKFYTAPTAIRMLMKFGDDPVTKHSRASLQVLGTVGEPINPEAWLWYHRVVGSQRCPIVDTFWQTETGGHMLTPLPGATPMKPGSASFPFFGVAPAILNESGEELEGEAEGYLVFKQPWPGIMRTVYGNHTRFETTYFKKFPGYYVTGDGCRRDQDGYYWITGRIDDMLNVSGHLLSTAEVESALVEHEAVAEAAVVGHPHPVKGECLYCFVTLCDGHTFSPTLTEELKKQIREKIGPIATPDYIQNAPGLPKTRSGKIMRRVLRKIAQNDHDLGDTSTVADPSVINHLFSHRCLTTQ</sequence>
<organism>
    <name type="scientific">Mus musculus</name>
    <name type="common">Mouse</name>
    <dbReference type="NCBI Taxonomy" id="10090"/>
    <lineage>
        <taxon>Eukaryota</taxon>
        <taxon>Metazoa</taxon>
        <taxon>Chordata</taxon>
        <taxon>Craniata</taxon>
        <taxon>Vertebrata</taxon>
        <taxon>Euteleostomi</taxon>
        <taxon>Mammalia</taxon>
        <taxon>Eutheria</taxon>
        <taxon>Euarchontoglires</taxon>
        <taxon>Glires</taxon>
        <taxon>Rodentia</taxon>
        <taxon>Myomorpha</taxon>
        <taxon>Muroidea</taxon>
        <taxon>Muridae</taxon>
        <taxon>Murinae</taxon>
        <taxon>Mus</taxon>
        <taxon>Mus</taxon>
    </lineage>
</organism>
<reference key="1">
    <citation type="journal article" date="2002" name="Mech. Dev.">
        <title>Expression of cytosolic acetyl-CoA synthetase gene is developmentally regulated.</title>
        <authorList>
            <person name="Loikkanen I."/>
            <person name="Haghighi S."/>
            <person name="Vainio S."/>
            <person name="Pajunen A."/>
        </authorList>
    </citation>
    <scope>NUCLEOTIDE SEQUENCE [MRNA]</scope>
</reference>
<reference key="2">
    <citation type="journal article" date="2005" name="Science">
        <title>The transcriptional landscape of the mammalian genome.</title>
        <authorList>
            <person name="Carninci P."/>
            <person name="Kasukawa T."/>
            <person name="Katayama S."/>
            <person name="Gough J."/>
            <person name="Frith M.C."/>
            <person name="Maeda N."/>
            <person name="Oyama R."/>
            <person name="Ravasi T."/>
            <person name="Lenhard B."/>
            <person name="Wells C."/>
            <person name="Kodzius R."/>
            <person name="Shimokawa K."/>
            <person name="Bajic V.B."/>
            <person name="Brenner S.E."/>
            <person name="Batalov S."/>
            <person name="Forrest A.R."/>
            <person name="Zavolan M."/>
            <person name="Davis M.J."/>
            <person name="Wilming L.G."/>
            <person name="Aidinis V."/>
            <person name="Allen J.E."/>
            <person name="Ambesi-Impiombato A."/>
            <person name="Apweiler R."/>
            <person name="Aturaliya R.N."/>
            <person name="Bailey T.L."/>
            <person name="Bansal M."/>
            <person name="Baxter L."/>
            <person name="Beisel K.W."/>
            <person name="Bersano T."/>
            <person name="Bono H."/>
            <person name="Chalk A.M."/>
            <person name="Chiu K.P."/>
            <person name="Choudhary V."/>
            <person name="Christoffels A."/>
            <person name="Clutterbuck D.R."/>
            <person name="Crowe M.L."/>
            <person name="Dalla E."/>
            <person name="Dalrymple B.P."/>
            <person name="de Bono B."/>
            <person name="Della Gatta G."/>
            <person name="di Bernardo D."/>
            <person name="Down T."/>
            <person name="Engstrom P."/>
            <person name="Fagiolini M."/>
            <person name="Faulkner G."/>
            <person name="Fletcher C.F."/>
            <person name="Fukushima T."/>
            <person name="Furuno M."/>
            <person name="Futaki S."/>
            <person name="Gariboldi M."/>
            <person name="Georgii-Hemming P."/>
            <person name="Gingeras T.R."/>
            <person name="Gojobori T."/>
            <person name="Green R.E."/>
            <person name="Gustincich S."/>
            <person name="Harbers M."/>
            <person name="Hayashi Y."/>
            <person name="Hensch T.K."/>
            <person name="Hirokawa N."/>
            <person name="Hill D."/>
            <person name="Huminiecki L."/>
            <person name="Iacono M."/>
            <person name="Ikeo K."/>
            <person name="Iwama A."/>
            <person name="Ishikawa T."/>
            <person name="Jakt M."/>
            <person name="Kanapin A."/>
            <person name="Katoh M."/>
            <person name="Kawasawa Y."/>
            <person name="Kelso J."/>
            <person name="Kitamura H."/>
            <person name="Kitano H."/>
            <person name="Kollias G."/>
            <person name="Krishnan S.P."/>
            <person name="Kruger A."/>
            <person name="Kummerfeld S.K."/>
            <person name="Kurochkin I.V."/>
            <person name="Lareau L.F."/>
            <person name="Lazarevic D."/>
            <person name="Lipovich L."/>
            <person name="Liu J."/>
            <person name="Liuni S."/>
            <person name="McWilliam S."/>
            <person name="Madan Babu M."/>
            <person name="Madera M."/>
            <person name="Marchionni L."/>
            <person name="Matsuda H."/>
            <person name="Matsuzawa S."/>
            <person name="Miki H."/>
            <person name="Mignone F."/>
            <person name="Miyake S."/>
            <person name="Morris K."/>
            <person name="Mottagui-Tabar S."/>
            <person name="Mulder N."/>
            <person name="Nakano N."/>
            <person name="Nakauchi H."/>
            <person name="Ng P."/>
            <person name="Nilsson R."/>
            <person name="Nishiguchi S."/>
            <person name="Nishikawa S."/>
            <person name="Nori F."/>
            <person name="Ohara O."/>
            <person name="Okazaki Y."/>
            <person name="Orlando V."/>
            <person name="Pang K.C."/>
            <person name="Pavan W.J."/>
            <person name="Pavesi G."/>
            <person name="Pesole G."/>
            <person name="Petrovsky N."/>
            <person name="Piazza S."/>
            <person name="Reed J."/>
            <person name="Reid J.F."/>
            <person name="Ring B.Z."/>
            <person name="Ringwald M."/>
            <person name="Rost B."/>
            <person name="Ruan Y."/>
            <person name="Salzberg S.L."/>
            <person name="Sandelin A."/>
            <person name="Schneider C."/>
            <person name="Schoenbach C."/>
            <person name="Sekiguchi K."/>
            <person name="Semple C.A."/>
            <person name="Seno S."/>
            <person name="Sessa L."/>
            <person name="Sheng Y."/>
            <person name="Shibata Y."/>
            <person name="Shimada H."/>
            <person name="Shimada K."/>
            <person name="Silva D."/>
            <person name="Sinclair B."/>
            <person name="Sperling S."/>
            <person name="Stupka E."/>
            <person name="Sugiura K."/>
            <person name="Sultana R."/>
            <person name="Takenaka Y."/>
            <person name="Taki K."/>
            <person name="Tammoja K."/>
            <person name="Tan S.L."/>
            <person name="Tang S."/>
            <person name="Taylor M.S."/>
            <person name="Tegner J."/>
            <person name="Teichmann S.A."/>
            <person name="Ueda H.R."/>
            <person name="van Nimwegen E."/>
            <person name="Verardo R."/>
            <person name="Wei C.L."/>
            <person name="Yagi K."/>
            <person name="Yamanishi H."/>
            <person name="Zabarovsky E."/>
            <person name="Zhu S."/>
            <person name="Zimmer A."/>
            <person name="Hide W."/>
            <person name="Bult C."/>
            <person name="Grimmond S.M."/>
            <person name="Teasdale R.D."/>
            <person name="Liu E.T."/>
            <person name="Brusic V."/>
            <person name="Quackenbush J."/>
            <person name="Wahlestedt C."/>
            <person name="Mattick J.S."/>
            <person name="Hume D.A."/>
            <person name="Kai C."/>
            <person name="Sasaki D."/>
            <person name="Tomaru Y."/>
            <person name="Fukuda S."/>
            <person name="Kanamori-Katayama M."/>
            <person name="Suzuki M."/>
            <person name="Aoki J."/>
            <person name="Arakawa T."/>
            <person name="Iida J."/>
            <person name="Imamura K."/>
            <person name="Itoh M."/>
            <person name="Kato T."/>
            <person name="Kawaji H."/>
            <person name="Kawagashira N."/>
            <person name="Kawashima T."/>
            <person name="Kojima M."/>
            <person name="Kondo S."/>
            <person name="Konno H."/>
            <person name="Nakano K."/>
            <person name="Ninomiya N."/>
            <person name="Nishio T."/>
            <person name="Okada M."/>
            <person name="Plessy C."/>
            <person name="Shibata K."/>
            <person name="Shiraki T."/>
            <person name="Suzuki S."/>
            <person name="Tagami M."/>
            <person name="Waki K."/>
            <person name="Watahiki A."/>
            <person name="Okamura-Oho Y."/>
            <person name="Suzuki H."/>
            <person name="Kawai J."/>
            <person name="Hayashizaki Y."/>
        </authorList>
    </citation>
    <scope>NUCLEOTIDE SEQUENCE [LARGE SCALE MRNA]</scope>
    <source>
        <strain>C57BL/6J</strain>
        <tissue>Eye</tissue>
    </source>
</reference>
<reference key="3">
    <citation type="journal article" date="2009" name="PLoS Biol.">
        <title>Lineage-specific biology revealed by a finished genome assembly of the mouse.</title>
        <authorList>
            <person name="Church D.M."/>
            <person name="Goodstadt L."/>
            <person name="Hillier L.W."/>
            <person name="Zody M.C."/>
            <person name="Goldstein S."/>
            <person name="She X."/>
            <person name="Bult C.J."/>
            <person name="Agarwala R."/>
            <person name="Cherry J.L."/>
            <person name="DiCuccio M."/>
            <person name="Hlavina W."/>
            <person name="Kapustin Y."/>
            <person name="Meric P."/>
            <person name="Maglott D."/>
            <person name="Birtle Z."/>
            <person name="Marques A.C."/>
            <person name="Graves T."/>
            <person name="Zhou S."/>
            <person name="Teague B."/>
            <person name="Potamousis K."/>
            <person name="Churas C."/>
            <person name="Place M."/>
            <person name="Herschleb J."/>
            <person name="Runnheim R."/>
            <person name="Forrest D."/>
            <person name="Amos-Landgraf J."/>
            <person name="Schwartz D.C."/>
            <person name="Cheng Z."/>
            <person name="Lindblad-Toh K."/>
            <person name="Eichler E.E."/>
            <person name="Ponting C.P."/>
        </authorList>
    </citation>
    <scope>NUCLEOTIDE SEQUENCE [LARGE SCALE GENOMIC DNA]</scope>
    <source>
        <strain>C57BL/6J</strain>
    </source>
</reference>
<reference key="4">
    <citation type="journal article" date="2004" name="Genome Res.">
        <title>The status, quality, and expansion of the NIH full-length cDNA project: the Mammalian Gene Collection (MGC).</title>
        <authorList>
            <consortium name="The MGC Project Team"/>
        </authorList>
    </citation>
    <scope>NUCLEOTIDE SEQUENCE [LARGE SCALE MRNA]</scope>
    <source>
        <strain>FVB/N-3</strain>
        <tissue>Mammary tumor</tissue>
    </source>
</reference>
<reference key="5">
    <citation type="journal article" date="2001" name="J. Biol. Chem.">
        <title>Acetyl-CoA synthetase 2, a mitochondrial matrix enzyme involved in the oxidation of acetate.</title>
        <authorList>
            <person name="Fujino T."/>
            <person name="Kondo J."/>
            <person name="Ishikawa M."/>
            <person name="Morikawa K."/>
            <person name="Yamamoto T.T."/>
        </authorList>
    </citation>
    <scope>FUNCTION</scope>
    <scope>CATALYTIC ACTIVITY</scope>
    <scope>SUBCELLULAR LOCATION</scope>
    <scope>BIOPHYSICOCHEMICAL PROPERTIES</scope>
</reference>
<reference key="6">
    <citation type="journal article" date="2006" name="Proc. Natl. Acad. Sci. U.S.A.">
        <title>Sirtuins deacetylate and activate mammalian acetyl-CoA synthetases.</title>
        <authorList>
            <person name="Hallows W.C."/>
            <person name="Lee S."/>
            <person name="Denu J.M."/>
        </authorList>
    </citation>
    <scope>FUNCTION</scope>
    <scope>CATALYTIC ACTIVITY</scope>
    <scope>ACTIVITY REGULATION</scope>
    <scope>ACETYLATION AT LYS-661</scope>
    <scope>IDENTIFICATION BY MASS SPECTROMETRY</scope>
</reference>
<reference key="7">
    <citation type="journal article" date="2007" name="Mol. Cell. Proteomics">
        <title>Qualitative and quantitative analyses of protein phosphorylation in naive and stimulated mouse synaptosomal preparations.</title>
        <authorList>
            <person name="Munton R.P."/>
            <person name="Tweedie-Cullen R."/>
            <person name="Livingstone-Zatchej M."/>
            <person name="Weinandy F."/>
            <person name="Waidelich M."/>
            <person name="Longo D."/>
            <person name="Gehrig P."/>
            <person name="Potthast F."/>
            <person name="Rutishauser D."/>
            <person name="Gerrits B."/>
            <person name="Panse C."/>
            <person name="Schlapbach R."/>
            <person name="Mansuy I.M."/>
        </authorList>
    </citation>
    <scope>IDENTIFICATION BY MASS SPECTROMETRY [LARGE SCALE ANALYSIS]</scope>
    <source>
        <tissue>Brain cortex</tissue>
    </source>
</reference>
<reference key="8">
    <citation type="journal article" date="2007" name="Proc. Natl. Acad. Sci. U.S.A.">
        <title>Large-scale phosphorylation analysis of mouse liver.</title>
        <authorList>
            <person name="Villen J."/>
            <person name="Beausoleil S.A."/>
            <person name="Gerber S.A."/>
            <person name="Gygi S.P."/>
        </authorList>
    </citation>
    <scope>PHOSPHORYLATION [LARGE SCALE ANALYSIS] AT SER-263 AND SER-267</scope>
    <scope>IDENTIFICATION BY MASS SPECTROMETRY [LARGE SCALE ANALYSIS]</scope>
    <source>
        <tissue>Liver</tissue>
    </source>
</reference>
<reference key="9">
    <citation type="journal article" date="2008" name="J. Proteome Res.">
        <title>Specific phosphopeptide enrichment with immobilized titanium ion affinity chromatography adsorbent for phosphoproteome analysis.</title>
        <authorList>
            <person name="Zhou H."/>
            <person name="Ye M."/>
            <person name="Dong J."/>
            <person name="Han G."/>
            <person name="Jiang X."/>
            <person name="Wu R."/>
            <person name="Zou H."/>
        </authorList>
    </citation>
    <scope>IDENTIFICATION BY MASS SPECTROMETRY [LARGE SCALE ANALYSIS]</scope>
    <source>
        <tissue>Liver</tissue>
    </source>
</reference>
<reference key="10">
    <citation type="journal article" date="2010" name="Cell">
        <title>A tissue-specific atlas of mouse protein phosphorylation and expression.</title>
        <authorList>
            <person name="Huttlin E.L."/>
            <person name="Jedrychowski M.P."/>
            <person name="Elias J.E."/>
            <person name="Goswami T."/>
            <person name="Rad R."/>
            <person name="Beausoleil S.A."/>
            <person name="Villen J."/>
            <person name="Haas W."/>
            <person name="Sowa M.E."/>
            <person name="Gygi S.P."/>
        </authorList>
    </citation>
    <scope>PHOSPHORYLATION [LARGE SCALE ANALYSIS] AT SER-30; SER-263; SER-265 AND SER-267</scope>
    <scope>IDENTIFICATION BY MASS SPECTROMETRY [LARGE SCALE ANALYSIS]</scope>
    <source>
        <tissue>Brain</tissue>
        <tissue>Brown adipose tissue</tissue>
        <tissue>Heart</tissue>
        <tissue>Kidney</tissue>
        <tissue>Liver</tissue>
        <tissue>Lung</tissue>
        <tissue>Spleen</tissue>
        <tissue>Testis</tissue>
    </source>
</reference>
<reference key="11">
    <citation type="journal article" date="2017" name="Mol. Cell">
        <title>Nucleus-Translocated ACSS2 Promotes Gene Transcription for Lysosomal Biogenesis and Autophagy.</title>
        <authorList>
            <person name="Li X."/>
            <person name="Yu W."/>
            <person name="Qian X."/>
            <person name="Xia Y."/>
            <person name="Zheng Y."/>
            <person name="Lee J.H."/>
            <person name="Li W."/>
            <person name="Lyu J."/>
            <person name="Rao G."/>
            <person name="Zhang X."/>
            <person name="Qian C.N."/>
            <person name="Rozen S.G."/>
            <person name="Jiang T."/>
            <person name="Lu Z."/>
        </authorList>
    </citation>
    <scope>SUBCELLULAR LOCATION</scope>
</reference>
<reference key="12">
    <citation type="journal article" date="2017" name="Nature">
        <title>Acetyl-CoA synthetase regulates histone acetylation and hippocampal memory.</title>
        <authorList>
            <person name="Mews P."/>
            <person name="Donahue G."/>
            <person name="Drake A.M."/>
            <person name="Luczak V."/>
            <person name="Abel T."/>
            <person name="Berger S.L."/>
        </authorList>
    </citation>
    <scope>FUNCTION</scope>
    <scope>CATALYTIC ACTIVITY</scope>
    <scope>SUBCELLULAR LOCATION</scope>
    <scope>TISSUE SPECIFICITY</scope>
    <scope>DISRUPTION PHENOTYPE</scope>
    <scope>INTERACTION WITH CREBBP</scope>
</reference>
<evidence type="ECO:0000250" key="1"/>
<evidence type="ECO:0000250" key="2">
    <source>
        <dbReference type="UniProtKB" id="Q9NR19"/>
    </source>
</evidence>
<evidence type="ECO:0000256" key="3">
    <source>
        <dbReference type="SAM" id="MobiDB-lite"/>
    </source>
</evidence>
<evidence type="ECO:0000269" key="4">
    <source>
    </source>
</evidence>
<evidence type="ECO:0000269" key="5">
    <source>
    </source>
</evidence>
<evidence type="ECO:0000269" key="6">
    <source>
    </source>
</evidence>
<evidence type="ECO:0000269" key="7">
    <source>
    </source>
</evidence>
<evidence type="ECO:0000303" key="8">
    <source>
    </source>
</evidence>
<evidence type="ECO:0000303" key="9">
    <source>
    </source>
</evidence>
<evidence type="ECO:0000305" key="10"/>
<evidence type="ECO:0000305" key="11">
    <source>
    </source>
</evidence>
<evidence type="ECO:0000305" key="12">
    <source>
    </source>
</evidence>
<evidence type="ECO:0007744" key="13">
    <source>
    </source>
</evidence>
<evidence type="ECO:0007744" key="14">
    <source>
    </source>
</evidence>
<comment type="function">
    <text evidence="2 4 5 7">Catalyzes the synthesis of acetyl-CoA from short-chain fatty acids (PubMed:11150295, PubMed:16790548, PubMed:28562591). Acetate is the preferred substrate but can also utilize propionate with a much lower affinity (PubMed:11150295). Nuclear ACSS2 promotes glucose deprivation-induced lysosomal biogenesis and autophagy, tumor cell survival and brain tumorigenesis (By similarity). Glucose deprivation results in AMPK-mediated phosphorylation of ACSS2 leading to its translocation to the nucleus where it binds to TFEB and locally produces acetyl-CoA for histone acetylation in the promoter regions of TFEB target genes thereby activating their transcription (By similarity). The regulation of genes associated with autophagy and lysosomal activity through ACSS2 is important for brain tumorigenesis and tumor survival (By similarity). Acts as a chromatin-bound transcriptional coactivator that up-regulates histone acetylation and expression of neuronal genes (PubMed:28562591). Can be recruited to the loci of memory-related neuronal genes to maintain a local acetyl-CoA pool, providing the substrate for histone acetylation and promoting the expression of specific genes, which is essential for maintaining long-term spatial memory (PubMed:28562591).</text>
</comment>
<comment type="catalytic activity">
    <reaction evidence="4 5 7">
        <text>acetate + ATP + CoA = acetyl-CoA + AMP + diphosphate</text>
        <dbReference type="Rhea" id="RHEA:23176"/>
        <dbReference type="ChEBI" id="CHEBI:30089"/>
        <dbReference type="ChEBI" id="CHEBI:30616"/>
        <dbReference type="ChEBI" id="CHEBI:33019"/>
        <dbReference type="ChEBI" id="CHEBI:57287"/>
        <dbReference type="ChEBI" id="CHEBI:57288"/>
        <dbReference type="ChEBI" id="CHEBI:456215"/>
        <dbReference type="EC" id="6.2.1.1"/>
    </reaction>
    <physiologicalReaction direction="left-to-right" evidence="11 12">
        <dbReference type="Rhea" id="RHEA:23177"/>
    </physiologicalReaction>
</comment>
<comment type="catalytic activity">
    <reaction evidence="4">
        <text>propanoate + ATP + CoA = propanoyl-CoA + AMP + diphosphate</text>
        <dbReference type="Rhea" id="RHEA:20373"/>
        <dbReference type="ChEBI" id="CHEBI:17272"/>
        <dbReference type="ChEBI" id="CHEBI:30616"/>
        <dbReference type="ChEBI" id="CHEBI:33019"/>
        <dbReference type="ChEBI" id="CHEBI:57287"/>
        <dbReference type="ChEBI" id="CHEBI:57392"/>
        <dbReference type="ChEBI" id="CHEBI:456215"/>
        <dbReference type="EC" id="6.2.1.17"/>
    </reaction>
    <physiologicalReaction direction="left-to-right" evidence="11">
        <dbReference type="Rhea" id="RHEA:20374"/>
    </physiologicalReaction>
</comment>
<comment type="activity regulation">
    <text evidence="5">Inhibited by acetylation at Lys-661 and activated by deacetylation mediated by the deacetylases SIRT1 and SIRT3.</text>
</comment>
<comment type="biophysicochemical properties">
    <kinetics>
        <KM evidence="4">0.11 mM for acetate</KM>
        <KM evidence="4">3.4 mM for propionate</KM>
    </kinetics>
</comment>
<comment type="subunit">
    <text evidence="2 7">Monomer (By similarity). Interacts with TFEB (By similarity). AMPK-mediated phosphorylated form at Ser-659 interacts with KPNA1; this interaction results in nuclear translocation of ACSS2 (By similarity). Interacts with the 'Thr-172' phosphorylated form of PRKAA2 (By similarity). Interacts with CREBBP (PubMed:28562591).</text>
</comment>
<comment type="subcellular location">
    <subcellularLocation>
        <location evidence="4 6">Cytoplasm</location>
        <location evidence="4 6">Cytosol</location>
    </subcellularLocation>
    <subcellularLocation>
        <location evidence="7">Cytoplasm</location>
    </subcellularLocation>
    <subcellularLocation>
        <location evidence="6 7">Nucleus</location>
    </subcellularLocation>
    <text evidence="2 7">Glucose deprivation results in its AMPK-dependent phosphorylation and subsequent nuclear translocation. Phosphorylation at Ser-659, leads to exposure of its nuclear localization signal which is required for its interaction with KPNA1 and subsequent translocation to the nucleus (By similarity). Found in the cytoplasm in undifferentiated neurons and upon differentiation, translocates to nucleus (PubMed:28562591).</text>
</comment>
<comment type="tissue specificity">
    <text evidence="7">Expressed in the hippocampus.</text>
</comment>
<comment type="PTM">
    <text evidence="5">Reversibly acetylated at Lys-661 (PubMed:16790548). The acetyl-CoA synthase activity is inhibited by acetylation and activated by deacetylation mediated by the deacetylases SIRT1 and SIRT3.</text>
</comment>
<comment type="disruption phenotype">
    <text evidence="7">Knockdown in the hippocampus decreases histone acetylation and is accompanied by impaired object location memory and defective up-regulation of immediate early genes following training.</text>
</comment>
<comment type="similarity">
    <text evidence="10">Belongs to the ATP-dependent AMP-binding enzyme family.</text>
</comment>
<dbReference type="EC" id="6.2.1.1" evidence="4 5 7"/>
<dbReference type="EC" id="6.2.1.17" evidence="4"/>
<dbReference type="EMBL" id="AF216873">
    <property type="protein sequence ID" value="AAF24510.1"/>
    <property type="molecule type" value="mRNA"/>
</dbReference>
<dbReference type="EMBL" id="AK053877">
    <property type="protein sequence ID" value="BAC35571.1"/>
    <property type="molecule type" value="mRNA"/>
</dbReference>
<dbReference type="EMBL" id="AL844852">
    <property type="status" value="NOT_ANNOTATED_CDS"/>
    <property type="molecule type" value="Genomic_DNA"/>
</dbReference>
<dbReference type="EMBL" id="BC051432">
    <property type="protein sequence ID" value="AAH51432.1"/>
    <property type="molecule type" value="mRNA"/>
</dbReference>
<dbReference type="CCDS" id="CCDS16950.1"/>
<dbReference type="RefSeq" id="NP_062785.2">
    <property type="nucleotide sequence ID" value="NM_019811.3"/>
</dbReference>
<dbReference type="SMR" id="Q9QXG4"/>
<dbReference type="BioGRID" id="208597">
    <property type="interactions" value="2"/>
</dbReference>
<dbReference type="DIP" id="DIP-61210N"/>
<dbReference type="FunCoup" id="Q9QXG4">
    <property type="interactions" value="1678"/>
</dbReference>
<dbReference type="IntAct" id="Q9QXG4">
    <property type="interactions" value="3"/>
</dbReference>
<dbReference type="STRING" id="10090.ENSMUSP00000029135"/>
<dbReference type="ChEMBL" id="CHEMBL2924"/>
<dbReference type="GlyGen" id="Q9QXG4">
    <property type="glycosylation" value="1 site, 1 O-linked glycan (1 site)"/>
</dbReference>
<dbReference type="iPTMnet" id="Q9QXG4"/>
<dbReference type="PhosphoSitePlus" id="Q9QXG4"/>
<dbReference type="SwissPalm" id="Q9QXG4"/>
<dbReference type="jPOST" id="Q9QXG4"/>
<dbReference type="PaxDb" id="10090-ENSMUSP00000029135"/>
<dbReference type="ProteomicsDB" id="285543"/>
<dbReference type="Pumba" id="Q9QXG4"/>
<dbReference type="Antibodypedia" id="1332">
    <property type="antibodies" value="459 antibodies from 34 providers"/>
</dbReference>
<dbReference type="DNASU" id="60525"/>
<dbReference type="Ensembl" id="ENSMUST00000029135.15">
    <property type="protein sequence ID" value="ENSMUSP00000029135.9"/>
    <property type="gene ID" value="ENSMUSG00000027605.19"/>
</dbReference>
<dbReference type="GeneID" id="60525"/>
<dbReference type="KEGG" id="mmu:60525"/>
<dbReference type="UCSC" id="uc008nku.1">
    <property type="organism name" value="mouse"/>
</dbReference>
<dbReference type="AGR" id="MGI:1890410"/>
<dbReference type="CTD" id="55902"/>
<dbReference type="MGI" id="MGI:1890410">
    <property type="gene designation" value="Acss2"/>
</dbReference>
<dbReference type="VEuPathDB" id="HostDB:ENSMUSG00000027605"/>
<dbReference type="eggNOG" id="KOG1175">
    <property type="taxonomic scope" value="Eukaryota"/>
</dbReference>
<dbReference type="GeneTree" id="ENSGT00940000156358"/>
<dbReference type="HOGENOM" id="CLU_000022_3_6_1"/>
<dbReference type="InParanoid" id="Q9QXG4"/>
<dbReference type="OMA" id="INVSYNC"/>
<dbReference type="OrthoDB" id="1706066at2759"/>
<dbReference type="TreeFam" id="TF300417"/>
<dbReference type="Reactome" id="R-MMU-2151201">
    <property type="pathway name" value="Transcriptional activation of mitochondrial biogenesis"/>
</dbReference>
<dbReference type="Reactome" id="R-MMU-71384">
    <property type="pathway name" value="Ethanol oxidation"/>
</dbReference>
<dbReference type="BioGRID-ORCS" id="60525">
    <property type="hits" value="2 hits in 79 CRISPR screens"/>
</dbReference>
<dbReference type="ChiTaRS" id="Acss2">
    <property type="organism name" value="mouse"/>
</dbReference>
<dbReference type="PRO" id="PR:Q9QXG4"/>
<dbReference type="Proteomes" id="UP000000589">
    <property type="component" value="Chromosome 2"/>
</dbReference>
<dbReference type="RNAct" id="Q9QXG4">
    <property type="molecule type" value="protein"/>
</dbReference>
<dbReference type="Bgee" id="ENSMUSG00000027605">
    <property type="expression patterns" value="Expressed in aorta tunica adventitia and 252 other cell types or tissues"/>
</dbReference>
<dbReference type="ExpressionAtlas" id="Q9QXG4">
    <property type="expression patterns" value="baseline and differential"/>
</dbReference>
<dbReference type="GO" id="GO:0005737">
    <property type="term" value="C:cytoplasm"/>
    <property type="evidence" value="ECO:0000314"/>
    <property type="project" value="UniProtKB"/>
</dbReference>
<dbReference type="GO" id="GO:0005829">
    <property type="term" value="C:cytosol"/>
    <property type="evidence" value="ECO:0000314"/>
    <property type="project" value="UniProtKB"/>
</dbReference>
<dbReference type="GO" id="GO:0005634">
    <property type="term" value="C:nucleus"/>
    <property type="evidence" value="ECO:0000314"/>
    <property type="project" value="UniProtKB"/>
</dbReference>
<dbReference type="GO" id="GO:0003987">
    <property type="term" value="F:acetate-CoA ligase activity"/>
    <property type="evidence" value="ECO:0000314"/>
    <property type="project" value="UniProtKB"/>
</dbReference>
<dbReference type="GO" id="GO:0005524">
    <property type="term" value="F:ATP binding"/>
    <property type="evidence" value="ECO:0007669"/>
    <property type="project" value="UniProtKB-KW"/>
</dbReference>
<dbReference type="GO" id="GO:0003682">
    <property type="term" value="F:chromatin binding"/>
    <property type="evidence" value="ECO:0000314"/>
    <property type="project" value="UniProtKB"/>
</dbReference>
<dbReference type="GO" id="GO:0050218">
    <property type="term" value="F:propionate-CoA ligase activity"/>
    <property type="evidence" value="ECO:0000314"/>
    <property type="project" value="UniProtKB"/>
</dbReference>
<dbReference type="GO" id="GO:0003713">
    <property type="term" value="F:transcription coactivator activity"/>
    <property type="evidence" value="ECO:0000315"/>
    <property type="project" value="UniProtKB"/>
</dbReference>
<dbReference type="GO" id="GO:0006085">
    <property type="term" value="P:acetyl-CoA biosynthetic process"/>
    <property type="evidence" value="ECO:0000314"/>
    <property type="project" value="MGI"/>
</dbReference>
<dbReference type="GO" id="GO:0006629">
    <property type="term" value="P:lipid metabolic process"/>
    <property type="evidence" value="ECO:0007669"/>
    <property type="project" value="UniProtKB-KW"/>
</dbReference>
<dbReference type="GO" id="GO:0007616">
    <property type="term" value="P:long-term memory"/>
    <property type="evidence" value="ECO:0000315"/>
    <property type="project" value="UniProtKB"/>
</dbReference>
<dbReference type="CDD" id="cd05966">
    <property type="entry name" value="ACS"/>
    <property type="match status" value="1"/>
</dbReference>
<dbReference type="FunFam" id="3.30.300.30:FF:000004">
    <property type="entry name" value="Acetyl-coenzyme A synthetase"/>
    <property type="match status" value="1"/>
</dbReference>
<dbReference type="FunFam" id="3.40.50.12780:FF:000001">
    <property type="entry name" value="Acetyl-coenzyme A synthetase"/>
    <property type="match status" value="1"/>
</dbReference>
<dbReference type="Gene3D" id="3.30.300.30">
    <property type="match status" value="1"/>
</dbReference>
<dbReference type="Gene3D" id="3.40.50.12780">
    <property type="entry name" value="N-terminal domain of ligase-like"/>
    <property type="match status" value="1"/>
</dbReference>
<dbReference type="InterPro" id="IPR032387">
    <property type="entry name" value="ACAS_N"/>
</dbReference>
<dbReference type="InterPro" id="IPR025110">
    <property type="entry name" value="AMP-bd_C"/>
</dbReference>
<dbReference type="InterPro" id="IPR045851">
    <property type="entry name" value="AMP-bd_C_sf"/>
</dbReference>
<dbReference type="InterPro" id="IPR020845">
    <property type="entry name" value="AMP-binding_CS"/>
</dbReference>
<dbReference type="InterPro" id="IPR000873">
    <property type="entry name" value="AMP-dep_synth/lig_dom"/>
</dbReference>
<dbReference type="InterPro" id="IPR042099">
    <property type="entry name" value="ANL_N_sf"/>
</dbReference>
<dbReference type="NCBIfam" id="NF001208">
    <property type="entry name" value="PRK00174.1"/>
    <property type="match status" value="1"/>
</dbReference>
<dbReference type="PANTHER" id="PTHR24095">
    <property type="entry name" value="ACETYL-COENZYME A SYNTHETASE"/>
    <property type="match status" value="1"/>
</dbReference>
<dbReference type="PANTHER" id="PTHR24095:SF126">
    <property type="entry name" value="ACETYL-COENZYME A SYNTHETASE, CYTOPLASMIC"/>
    <property type="match status" value="1"/>
</dbReference>
<dbReference type="Pfam" id="PF16177">
    <property type="entry name" value="ACAS_N"/>
    <property type="match status" value="1"/>
</dbReference>
<dbReference type="Pfam" id="PF00501">
    <property type="entry name" value="AMP-binding"/>
    <property type="match status" value="1"/>
</dbReference>
<dbReference type="Pfam" id="PF13193">
    <property type="entry name" value="AMP-binding_C"/>
    <property type="match status" value="1"/>
</dbReference>
<dbReference type="SUPFAM" id="SSF56801">
    <property type="entry name" value="Acetyl-CoA synthetase-like"/>
    <property type="match status" value="1"/>
</dbReference>
<dbReference type="PROSITE" id="PS00455">
    <property type="entry name" value="AMP_BINDING"/>
    <property type="match status" value="1"/>
</dbReference>
<feature type="chain" id="PRO_0000208424" description="Acetyl-coenzyme A synthetase, cytoplasmic">
    <location>
        <begin position="1"/>
        <end position="701"/>
    </location>
</feature>
<feature type="region of interest" description="Interaction with TFEB" evidence="2">
    <location>
        <begin position="1"/>
        <end position="107"/>
    </location>
</feature>
<feature type="region of interest" description="Disordered" evidence="3">
    <location>
        <begin position="1"/>
        <end position="37"/>
    </location>
</feature>
<feature type="short sequence motif" description="Nuclear localization signal" evidence="2">
    <location>
        <begin position="656"/>
        <end position="668"/>
    </location>
</feature>
<feature type="compositionally biased region" description="Basic and acidic residues" evidence="3">
    <location>
        <begin position="1"/>
        <end position="26"/>
    </location>
</feature>
<feature type="binding site" evidence="1">
    <location>
        <begin position="219"/>
        <end position="222"/>
    </location>
    <ligand>
        <name>CoA</name>
        <dbReference type="ChEBI" id="CHEBI:57287"/>
    </ligand>
</feature>
<feature type="binding site" evidence="1">
    <location>
        <position position="363"/>
    </location>
    <ligand>
        <name>CoA</name>
        <dbReference type="ChEBI" id="CHEBI:57287"/>
    </ligand>
</feature>
<feature type="binding site" evidence="1">
    <location>
        <begin position="439"/>
        <end position="441"/>
    </location>
    <ligand>
        <name>ATP</name>
        <dbReference type="ChEBI" id="CHEBI:30616"/>
    </ligand>
</feature>
<feature type="binding site" evidence="1">
    <location>
        <begin position="463"/>
        <end position="468"/>
    </location>
    <ligand>
        <name>ATP</name>
        <dbReference type="ChEBI" id="CHEBI:30616"/>
    </ligand>
</feature>
<feature type="binding site" evidence="1">
    <location>
        <position position="552"/>
    </location>
    <ligand>
        <name>ATP</name>
        <dbReference type="ChEBI" id="CHEBI:30616"/>
    </ligand>
</feature>
<feature type="binding site" evidence="1">
    <location>
        <position position="567"/>
    </location>
    <ligand>
        <name>ATP</name>
        <dbReference type="ChEBI" id="CHEBI:30616"/>
    </ligand>
</feature>
<feature type="binding site" evidence="1">
    <location>
        <position position="575"/>
    </location>
    <ligand>
        <name>CoA</name>
        <dbReference type="ChEBI" id="CHEBI:57287"/>
    </ligand>
</feature>
<feature type="binding site" evidence="1">
    <location>
        <position position="636"/>
    </location>
    <ligand>
        <name>CoA</name>
        <dbReference type="ChEBI" id="CHEBI:57287"/>
    </ligand>
</feature>
<feature type="modified residue" description="Phosphoserine" evidence="14">
    <location>
        <position position="30"/>
    </location>
</feature>
<feature type="modified residue" description="Phosphoserine" evidence="13 14">
    <location>
        <position position="263"/>
    </location>
</feature>
<feature type="modified residue" description="Phosphoserine" evidence="14">
    <location>
        <position position="265"/>
    </location>
</feature>
<feature type="modified residue" description="Phosphoserine" evidence="13 14">
    <location>
        <position position="267"/>
    </location>
</feature>
<feature type="modified residue" description="N6-acetyllysine" evidence="2">
    <location>
        <position position="418"/>
    </location>
</feature>
<feature type="modified residue" description="Phosphoserine; by AMPK" evidence="2">
    <location>
        <position position="659"/>
    </location>
</feature>
<feature type="modified residue" description="N6-acetyllysine" evidence="5">
    <location>
        <position position="661"/>
    </location>
</feature>
<feature type="sequence conflict" description="In Ref. 1; AAF24510." evidence="10" ref="1">
    <original>PAI</original>
    <variation>LQS</variation>
    <location>
        <begin position="498"/>
        <end position="500"/>
    </location>
</feature>
<feature type="sequence conflict" description="In Ref. 1; AAF24510." evidence="10" ref="1">
    <original>PKT</original>
    <variation>LKP</variation>
    <location>
        <begin position="655"/>
        <end position="657"/>
    </location>
</feature>
<keyword id="KW-0007">Acetylation</keyword>
<keyword id="KW-0010">Activator</keyword>
<keyword id="KW-0067">ATP-binding</keyword>
<keyword id="KW-0963">Cytoplasm</keyword>
<keyword id="KW-0436">Ligase</keyword>
<keyword id="KW-0443">Lipid metabolism</keyword>
<keyword id="KW-0547">Nucleotide-binding</keyword>
<keyword id="KW-0539">Nucleus</keyword>
<keyword id="KW-0597">Phosphoprotein</keyword>
<keyword id="KW-1185">Reference proteome</keyword>
<keyword id="KW-0804">Transcription</keyword>
<keyword id="KW-0805">Transcription regulation</keyword>
<accession>Q9QXG4</accession>
<accession>Q8BK97</accession>
<gene>
    <name type="primary">Acss2</name>
    <name type="synonym">Acas2</name>
    <name type="synonym">Acecs1</name>
</gene>
<proteinExistence type="evidence at protein level"/>
<protein>
    <recommendedName>
        <fullName>Acetyl-coenzyme A synthetase, cytoplasmic</fullName>
        <ecNumber evidence="4 5 7">6.2.1.1</ecNumber>
    </recommendedName>
    <alternativeName>
        <fullName>Acetate--CoA ligase</fullName>
    </alternativeName>
    <alternativeName>
        <fullName>Acetyl-CoA synthetase</fullName>
        <shortName>ACS</shortName>
        <shortName>AceCS</shortName>
    </alternativeName>
    <alternativeName>
        <fullName evidence="8 9">Acetyl-CoA synthetase 1</fullName>
        <shortName evidence="8 9">AceCS1</shortName>
    </alternativeName>
    <alternativeName>
        <fullName>Acyl-CoA synthetase short-chain family member 2</fullName>
    </alternativeName>
    <alternativeName>
        <fullName>Acyl-activating enzyme</fullName>
    </alternativeName>
    <alternativeName>
        <fullName>Propionate--CoA ligase</fullName>
        <ecNumber evidence="4">6.2.1.17</ecNumber>
    </alternativeName>
</protein>
<name>ACSA_MOUSE</name>